<reference key="1">
    <citation type="journal article" date="2005" name="Biochemistry">
        <title>Crystal structure of the disintegrin heterodimer from saw-scaled viper (Echis carinatus) at 1.9 A resolution.</title>
        <authorList>
            <person name="Bilgrami S."/>
            <person name="Yadav S."/>
            <person name="Kaur P."/>
            <person name="Sharma S."/>
            <person name="Perbandt M."/>
            <person name="Betzel C."/>
            <person name="Singh T.P."/>
        </authorList>
    </citation>
    <scope>PROTEIN SEQUENCE</scope>
    <scope>SUBUNIT</scope>
    <scope>X-RAY CRYSTALLOGRAPHY (1.9 ANGSTROMS)</scope>
    <scope>DISULFIDE BONDS</scope>
    <source>
        <tissue>Venom</tissue>
    </source>
</reference>
<proteinExistence type="evidence at protein level"/>
<protein>
    <recommendedName>
        <fullName>Disintegrin schistatin-like subunit B</fullName>
    </recommendedName>
</protein>
<keyword id="KW-0002">3D-structure</keyword>
<keyword id="KW-1217">Cell adhesion impairing toxin</keyword>
<keyword id="KW-0903">Direct protein sequencing</keyword>
<keyword id="KW-1015">Disulfide bond</keyword>
<keyword id="KW-1199">Hemostasis impairing toxin</keyword>
<keyword id="KW-1201">Platelet aggregation inhibiting toxin</keyword>
<keyword id="KW-0964">Secreted</keyword>
<keyword id="KW-0800">Toxin</keyword>
<dbReference type="PDB" id="1TEJ">
    <property type="method" value="X-ray"/>
    <property type="resolution" value="1.90 A"/>
    <property type="chains" value="B=1-63"/>
</dbReference>
<dbReference type="PDBsum" id="1TEJ"/>
<dbReference type="SMR" id="P0C6B5"/>
<dbReference type="EvolutionaryTrace" id="P0C6B5"/>
<dbReference type="GO" id="GO:0005576">
    <property type="term" value="C:extracellular region"/>
    <property type="evidence" value="ECO:0007669"/>
    <property type="project" value="UniProtKB-SubCell"/>
</dbReference>
<dbReference type="GO" id="GO:0090729">
    <property type="term" value="F:toxin activity"/>
    <property type="evidence" value="ECO:0007669"/>
    <property type="project" value="UniProtKB-KW"/>
</dbReference>
<dbReference type="Gene3D" id="4.10.70.10">
    <property type="entry name" value="Disintegrin domain"/>
    <property type="match status" value="1"/>
</dbReference>
<dbReference type="InterPro" id="IPR018358">
    <property type="entry name" value="Disintegrin_CS"/>
</dbReference>
<dbReference type="InterPro" id="IPR001762">
    <property type="entry name" value="Disintegrin_dom"/>
</dbReference>
<dbReference type="InterPro" id="IPR036436">
    <property type="entry name" value="Disintegrin_dom_sf"/>
</dbReference>
<dbReference type="PANTHER" id="PTHR11905">
    <property type="entry name" value="ADAM A DISINTEGRIN AND METALLOPROTEASE DOMAIN"/>
    <property type="match status" value="1"/>
</dbReference>
<dbReference type="PANTHER" id="PTHR11905:SF159">
    <property type="entry name" value="ADAM METALLOPROTEASE"/>
    <property type="match status" value="1"/>
</dbReference>
<dbReference type="Pfam" id="PF00200">
    <property type="entry name" value="Disintegrin"/>
    <property type="match status" value="1"/>
</dbReference>
<dbReference type="PRINTS" id="PR00289">
    <property type="entry name" value="DISINTEGRIN"/>
</dbReference>
<dbReference type="SMART" id="SM00050">
    <property type="entry name" value="DISIN"/>
    <property type="match status" value="1"/>
</dbReference>
<dbReference type="SUPFAM" id="SSF57552">
    <property type="entry name" value="Blood coagulation inhibitor (disintegrin)"/>
    <property type="match status" value="1"/>
</dbReference>
<dbReference type="PROSITE" id="PS00427">
    <property type="entry name" value="DISINTEGRIN_1"/>
    <property type="match status" value="1"/>
</dbReference>
<dbReference type="PROSITE" id="PS50214">
    <property type="entry name" value="DISINTEGRIN_2"/>
    <property type="match status" value="1"/>
</dbReference>
<name>DIDLB_ECHCA</name>
<sequence length="63" mass="6961">NSVNPCCDPQTCKPIEGKHCISGPCCENCYFLRSGTICQRARGDGNNDYCTGITPDCPRNRYN</sequence>
<accession>P0C6B5</accession>
<evidence type="ECO:0000250" key="1"/>
<evidence type="ECO:0000255" key="2">
    <source>
        <dbReference type="PROSITE-ProRule" id="PRU00068"/>
    </source>
</evidence>
<evidence type="ECO:0000269" key="3">
    <source>
    </source>
</evidence>
<evidence type="ECO:0000305" key="4"/>
<evidence type="ECO:0007829" key="5">
    <source>
        <dbReference type="PDB" id="1TEJ"/>
    </source>
</evidence>
<organism>
    <name type="scientific">Echis carinatus</name>
    <name type="common">Saw-scaled viper</name>
    <dbReference type="NCBI Taxonomy" id="40353"/>
    <lineage>
        <taxon>Eukaryota</taxon>
        <taxon>Metazoa</taxon>
        <taxon>Chordata</taxon>
        <taxon>Craniata</taxon>
        <taxon>Vertebrata</taxon>
        <taxon>Euteleostomi</taxon>
        <taxon>Lepidosauria</taxon>
        <taxon>Squamata</taxon>
        <taxon>Bifurcata</taxon>
        <taxon>Unidentata</taxon>
        <taxon>Episquamata</taxon>
        <taxon>Toxicofera</taxon>
        <taxon>Serpentes</taxon>
        <taxon>Colubroidea</taxon>
        <taxon>Viperidae</taxon>
        <taxon>Viperinae</taxon>
        <taxon>Echis</taxon>
    </lineage>
</organism>
<feature type="chain" id="PRO_0000319470" description="Disintegrin schistatin-like subunit B">
    <location>
        <begin position="1"/>
        <end position="63"/>
    </location>
</feature>
<feature type="domain" description="Disintegrin" evidence="2">
    <location>
        <begin position="1"/>
        <end position="63"/>
    </location>
</feature>
<feature type="short sequence motif" description="Cell attachment site">
    <location>
        <begin position="42"/>
        <end position="44"/>
    </location>
</feature>
<feature type="disulfide bond" evidence="2 3">
    <location>
        <begin position="6"/>
        <end position="29"/>
    </location>
</feature>
<feature type="disulfide bond" description="Interchain (with C-11 in subunit A)" evidence="2 3">
    <location>
        <position position="7"/>
    </location>
</feature>
<feature type="disulfide bond" description="Interchain (with C-6 in subunit A)" evidence="2 3">
    <location>
        <position position="12"/>
    </location>
</feature>
<feature type="disulfide bond" evidence="2 3">
    <location>
        <begin position="20"/>
        <end position="26"/>
    </location>
</feature>
<feature type="disulfide bond" evidence="2 3">
    <location>
        <begin position="25"/>
        <end position="50"/>
    </location>
</feature>
<feature type="disulfide bond" evidence="2 3">
    <location>
        <begin position="38"/>
        <end position="57"/>
    </location>
</feature>
<feature type="turn" evidence="5">
    <location>
        <begin position="9"/>
        <end position="11"/>
    </location>
</feature>
<feature type="strand" evidence="5">
    <location>
        <begin position="12"/>
        <end position="14"/>
    </location>
</feature>
<feature type="strand" evidence="5">
    <location>
        <begin position="21"/>
        <end position="23"/>
    </location>
</feature>
<feature type="strand" evidence="5">
    <location>
        <begin position="37"/>
        <end position="39"/>
    </location>
</feature>
<feature type="strand" evidence="5">
    <location>
        <begin position="42"/>
        <end position="45"/>
    </location>
</feature>
<comment type="function">
    <text evidence="1">May bind to both alpha-IIb/beta-3 (ITGA2B/ITGB3) and alpha-V/beta-3 (ITGAV/ITGB3) integrins, and may inhibit platelet aggregation.</text>
</comment>
<comment type="subunit">
    <text evidence="3">Heterodimer with subunit A; disulfide-linked.</text>
</comment>
<comment type="subcellular location">
    <subcellularLocation>
        <location>Secreted</location>
    </subcellularLocation>
</comment>
<comment type="tissue specificity">
    <text>Expressed by the venom gland.</text>
</comment>
<comment type="similarity">
    <text evidence="4">Belongs to the disintegrin family. Dimeric disintegrin subfamily.</text>
</comment>